<evidence type="ECO:0000255" key="1">
    <source>
        <dbReference type="HAMAP-Rule" id="MF_00022"/>
    </source>
</evidence>
<keyword id="KW-0030">Aminoacyl-tRNA synthetase</keyword>
<keyword id="KW-0067">ATP-binding</keyword>
<keyword id="KW-0963">Cytoplasm</keyword>
<keyword id="KW-0436">Ligase</keyword>
<keyword id="KW-0547">Nucleotide-binding</keyword>
<keyword id="KW-0648">Protein biosynthesis</keyword>
<dbReference type="EC" id="6.1.1.17" evidence="1"/>
<dbReference type="EMBL" id="CP000661">
    <property type="protein sequence ID" value="ABP69288.1"/>
    <property type="molecule type" value="Genomic_DNA"/>
</dbReference>
<dbReference type="SMR" id="A4WPH4"/>
<dbReference type="STRING" id="349102.Rsph17025_0382"/>
<dbReference type="KEGG" id="rsq:Rsph17025_0382"/>
<dbReference type="eggNOG" id="COG0008">
    <property type="taxonomic scope" value="Bacteria"/>
</dbReference>
<dbReference type="HOGENOM" id="CLU_015768_6_1_5"/>
<dbReference type="BioCyc" id="RSPH349102:G1G8M-389-MONOMER"/>
<dbReference type="GO" id="GO:0005737">
    <property type="term" value="C:cytoplasm"/>
    <property type="evidence" value="ECO:0007669"/>
    <property type="project" value="UniProtKB-SubCell"/>
</dbReference>
<dbReference type="GO" id="GO:0005524">
    <property type="term" value="F:ATP binding"/>
    <property type="evidence" value="ECO:0007669"/>
    <property type="project" value="UniProtKB-UniRule"/>
</dbReference>
<dbReference type="GO" id="GO:0004818">
    <property type="term" value="F:glutamate-tRNA ligase activity"/>
    <property type="evidence" value="ECO:0007669"/>
    <property type="project" value="UniProtKB-UniRule"/>
</dbReference>
<dbReference type="GO" id="GO:0000049">
    <property type="term" value="F:tRNA binding"/>
    <property type="evidence" value="ECO:0007669"/>
    <property type="project" value="InterPro"/>
</dbReference>
<dbReference type="GO" id="GO:0006424">
    <property type="term" value="P:glutamyl-tRNA aminoacylation"/>
    <property type="evidence" value="ECO:0007669"/>
    <property type="project" value="UniProtKB-UniRule"/>
</dbReference>
<dbReference type="Gene3D" id="1.10.10.350">
    <property type="match status" value="1"/>
</dbReference>
<dbReference type="Gene3D" id="3.40.50.620">
    <property type="entry name" value="HUPs"/>
    <property type="match status" value="1"/>
</dbReference>
<dbReference type="HAMAP" id="MF_00022">
    <property type="entry name" value="Glu_tRNA_synth_type1"/>
    <property type="match status" value="1"/>
</dbReference>
<dbReference type="InterPro" id="IPR045462">
    <property type="entry name" value="aa-tRNA-synth_I_cd-bd"/>
</dbReference>
<dbReference type="InterPro" id="IPR020751">
    <property type="entry name" value="aa-tRNA-synth_I_codon-bd_sub2"/>
</dbReference>
<dbReference type="InterPro" id="IPR001412">
    <property type="entry name" value="aa-tRNA-synth_I_CS"/>
</dbReference>
<dbReference type="InterPro" id="IPR008925">
    <property type="entry name" value="aa_tRNA-synth_I_cd-bd_sf"/>
</dbReference>
<dbReference type="InterPro" id="IPR004527">
    <property type="entry name" value="Glu-tRNA-ligase_bac/mito"/>
</dbReference>
<dbReference type="InterPro" id="IPR000924">
    <property type="entry name" value="Glu/Gln-tRNA-synth"/>
</dbReference>
<dbReference type="InterPro" id="IPR020058">
    <property type="entry name" value="Glu/Gln-tRNA-synth_Ib_cat-dom"/>
</dbReference>
<dbReference type="InterPro" id="IPR049940">
    <property type="entry name" value="GluQ/Sye"/>
</dbReference>
<dbReference type="InterPro" id="IPR014729">
    <property type="entry name" value="Rossmann-like_a/b/a_fold"/>
</dbReference>
<dbReference type="NCBIfam" id="TIGR00464">
    <property type="entry name" value="gltX_bact"/>
    <property type="match status" value="1"/>
</dbReference>
<dbReference type="PANTHER" id="PTHR43311">
    <property type="entry name" value="GLUTAMATE--TRNA LIGASE"/>
    <property type="match status" value="1"/>
</dbReference>
<dbReference type="PANTHER" id="PTHR43311:SF2">
    <property type="entry name" value="GLUTAMATE--TRNA LIGASE, MITOCHONDRIAL-RELATED"/>
    <property type="match status" value="1"/>
</dbReference>
<dbReference type="Pfam" id="PF19269">
    <property type="entry name" value="Anticodon_2"/>
    <property type="match status" value="1"/>
</dbReference>
<dbReference type="Pfam" id="PF00749">
    <property type="entry name" value="tRNA-synt_1c"/>
    <property type="match status" value="1"/>
</dbReference>
<dbReference type="PRINTS" id="PR00987">
    <property type="entry name" value="TRNASYNTHGLU"/>
</dbReference>
<dbReference type="SUPFAM" id="SSF48163">
    <property type="entry name" value="An anticodon-binding domain of class I aminoacyl-tRNA synthetases"/>
    <property type="match status" value="1"/>
</dbReference>
<dbReference type="SUPFAM" id="SSF52374">
    <property type="entry name" value="Nucleotidylyl transferase"/>
    <property type="match status" value="1"/>
</dbReference>
<dbReference type="PROSITE" id="PS00178">
    <property type="entry name" value="AA_TRNA_LIGASE_I"/>
    <property type="match status" value="1"/>
</dbReference>
<reference key="1">
    <citation type="submission" date="2007-04" db="EMBL/GenBank/DDBJ databases">
        <title>Complete sequence of chromosome of Rhodobacter sphaeroides ATCC 17025.</title>
        <authorList>
            <consortium name="US DOE Joint Genome Institute"/>
            <person name="Copeland A."/>
            <person name="Lucas S."/>
            <person name="Lapidus A."/>
            <person name="Barry K."/>
            <person name="Detter J.C."/>
            <person name="Glavina del Rio T."/>
            <person name="Hammon N."/>
            <person name="Israni S."/>
            <person name="Dalin E."/>
            <person name="Tice H."/>
            <person name="Pitluck S."/>
            <person name="Chertkov O."/>
            <person name="Brettin T."/>
            <person name="Bruce D."/>
            <person name="Han C."/>
            <person name="Schmutz J."/>
            <person name="Larimer F."/>
            <person name="Land M."/>
            <person name="Hauser L."/>
            <person name="Kyrpides N."/>
            <person name="Kim E."/>
            <person name="Richardson P."/>
            <person name="Mackenzie C."/>
            <person name="Choudhary M."/>
            <person name="Donohue T.J."/>
            <person name="Kaplan S."/>
        </authorList>
    </citation>
    <scope>NUCLEOTIDE SEQUENCE [LARGE SCALE GENOMIC DNA]</scope>
    <source>
        <strain>ATCC 17025 / ATH 2.4.3</strain>
    </source>
</reference>
<protein>
    <recommendedName>
        <fullName evidence="1">Glutamate--tRNA ligase 1</fullName>
        <ecNumber evidence="1">6.1.1.17</ecNumber>
    </recommendedName>
    <alternativeName>
        <fullName evidence="1">Glutamyl-tRNA synthetase 1</fullName>
        <shortName evidence="1">GluRS 1</shortName>
    </alternativeName>
</protein>
<feature type="chain" id="PRO_0000367745" description="Glutamate--tRNA ligase 1">
    <location>
        <begin position="1"/>
        <end position="441"/>
    </location>
</feature>
<feature type="short sequence motif" description="'HIGH' region" evidence="1">
    <location>
        <begin position="9"/>
        <end position="19"/>
    </location>
</feature>
<feature type="short sequence motif" description="'KMSKS' region" evidence="1">
    <location>
        <begin position="239"/>
        <end position="243"/>
    </location>
</feature>
<feature type="binding site" evidence="1">
    <location>
        <position position="242"/>
    </location>
    <ligand>
        <name>ATP</name>
        <dbReference type="ChEBI" id="CHEBI:30616"/>
    </ligand>
</feature>
<comment type="function">
    <text evidence="1">Catalyzes the attachment of glutamate to tRNA(Glu) in a two-step reaction: glutamate is first activated by ATP to form Glu-AMP and then transferred to the acceptor end of tRNA(Glu).</text>
</comment>
<comment type="catalytic activity">
    <reaction evidence="1">
        <text>tRNA(Glu) + L-glutamate + ATP = L-glutamyl-tRNA(Glu) + AMP + diphosphate</text>
        <dbReference type="Rhea" id="RHEA:23540"/>
        <dbReference type="Rhea" id="RHEA-COMP:9663"/>
        <dbReference type="Rhea" id="RHEA-COMP:9680"/>
        <dbReference type="ChEBI" id="CHEBI:29985"/>
        <dbReference type="ChEBI" id="CHEBI:30616"/>
        <dbReference type="ChEBI" id="CHEBI:33019"/>
        <dbReference type="ChEBI" id="CHEBI:78442"/>
        <dbReference type="ChEBI" id="CHEBI:78520"/>
        <dbReference type="ChEBI" id="CHEBI:456215"/>
        <dbReference type="EC" id="6.1.1.17"/>
    </reaction>
</comment>
<comment type="subunit">
    <text evidence="1">Monomer.</text>
</comment>
<comment type="subcellular location">
    <subcellularLocation>
        <location evidence="1">Cytoplasm</location>
    </subcellularLocation>
</comment>
<comment type="similarity">
    <text evidence="1">Belongs to the class-I aminoacyl-tRNA synthetase family. Glutamate--tRNA ligase type 1 subfamily.</text>
</comment>
<organism>
    <name type="scientific">Cereibacter sphaeroides (strain ATCC 17025 / ATH 2.4.3)</name>
    <name type="common">Rhodobacter sphaeroides</name>
    <dbReference type="NCBI Taxonomy" id="349102"/>
    <lineage>
        <taxon>Bacteria</taxon>
        <taxon>Pseudomonadati</taxon>
        <taxon>Pseudomonadota</taxon>
        <taxon>Alphaproteobacteria</taxon>
        <taxon>Rhodobacterales</taxon>
        <taxon>Paracoccaceae</taxon>
        <taxon>Cereibacter</taxon>
    </lineage>
</organism>
<proteinExistence type="inferred from homology"/>
<sequence length="441" mass="49046">MTTVTRFAPSPTGFIHVGNLRTALMNWAIARKSGGTFILRLDDTDRERSKQEYSDAIMQDLEWLGLTWDRLERQSDRLDRYAEAAGDLRRAGRFYECFESPTELDLKRKKLLNMGKPPVYDRAALKLSDEDRARLREERGGYWRFLLDQERIEWTDGILGPISIDAASVSDPVLIRADGQVLYTFASSVDDIDMGVTFIVRGADHVTNTATQIQIMQAMGGTPPSFAHHSLLTGAQGEALSKRLGTLSLRDLRARGVEPMALLSLMARLGSSQPVELFRTHEELLAGFDVGTFGAAPTKFDAEDLFPLTRHYVQGLPFEAVAERIRSLGVPDALAEPFWRVAKDNIAVLEDLGGWWTLFSEGAEPQIDPEDADFIRQAMALLPEPPYGPETWGQWTAAVKEATGRKGKGLFMPLRKALTGQAHGPEMADVMPLLQTVRAKG</sequence>
<gene>
    <name evidence="1" type="primary">gltX1</name>
    <name type="ordered locus">Rsph17025_0382</name>
</gene>
<name>SYE1_CERS5</name>
<accession>A4WPH4</accession>